<dbReference type="EMBL" id="AY665239">
    <property type="protein sequence ID" value="AAV74277.1"/>
    <property type="molecule type" value="mRNA"/>
</dbReference>
<dbReference type="RefSeq" id="NP_001266932.1">
    <property type="nucleotide sequence ID" value="NM_001280003.1"/>
</dbReference>
<dbReference type="SMR" id="Q5IS89"/>
<dbReference type="STRING" id="39432.ENSSBOP00000018016"/>
<dbReference type="Ensembl" id="ENSSBOT00000034849.1">
    <property type="protein sequence ID" value="ENSSBOP00000018034.1"/>
    <property type="gene ID" value="ENSSBOG00000025624.1"/>
</dbReference>
<dbReference type="GeneID" id="101033157"/>
<dbReference type="CTD" id="3975"/>
<dbReference type="GeneTree" id="ENSGT00940000160834"/>
<dbReference type="Proteomes" id="UP000233220">
    <property type="component" value="Unplaced"/>
</dbReference>
<dbReference type="GO" id="GO:0005634">
    <property type="term" value="C:nucleus"/>
    <property type="evidence" value="ECO:0000250"/>
    <property type="project" value="UniProtKB"/>
</dbReference>
<dbReference type="GO" id="GO:0032991">
    <property type="term" value="C:protein-containing complex"/>
    <property type="evidence" value="ECO:0000250"/>
    <property type="project" value="UniProtKB"/>
</dbReference>
<dbReference type="GO" id="GO:0003700">
    <property type="term" value="F:DNA-binding transcription factor activity"/>
    <property type="evidence" value="ECO:0000250"/>
    <property type="project" value="UniProtKB"/>
</dbReference>
<dbReference type="GO" id="GO:0000981">
    <property type="term" value="F:DNA-binding transcription factor activity, RNA polymerase II-specific"/>
    <property type="evidence" value="ECO:0007669"/>
    <property type="project" value="InterPro"/>
</dbReference>
<dbReference type="GO" id="GO:0000977">
    <property type="term" value="F:RNA polymerase II transcription regulatory region sequence-specific DNA binding"/>
    <property type="evidence" value="ECO:0007669"/>
    <property type="project" value="TreeGrafter"/>
</dbReference>
<dbReference type="GO" id="GO:0008270">
    <property type="term" value="F:zinc ion binding"/>
    <property type="evidence" value="ECO:0007669"/>
    <property type="project" value="InterPro"/>
</dbReference>
<dbReference type="GO" id="GO:0048646">
    <property type="term" value="P:anatomical structure formation involved in morphogenesis"/>
    <property type="evidence" value="ECO:0000250"/>
    <property type="project" value="UniProtKB"/>
</dbReference>
<dbReference type="GO" id="GO:0009653">
    <property type="term" value="P:anatomical structure morphogenesis"/>
    <property type="evidence" value="ECO:0000250"/>
    <property type="project" value="UniProtKB"/>
</dbReference>
<dbReference type="GO" id="GO:0009948">
    <property type="term" value="P:anterior/posterior axis specification"/>
    <property type="evidence" value="ECO:0000250"/>
    <property type="project" value="UniProtKB"/>
</dbReference>
<dbReference type="GO" id="GO:0009952">
    <property type="term" value="P:anterior/posterior pattern specification"/>
    <property type="evidence" value="ECO:0000250"/>
    <property type="project" value="UniProtKB"/>
</dbReference>
<dbReference type="GO" id="GO:0007267">
    <property type="term" value="P:cell-cell signaling"/>
    <property type="evidence" value="ECO:0000250"/>
    <property type="project" value="UniProtKB"/>
</dbReference>
<dbReference type="GO" id="GO:0021702">
    <property type="term" value="P:cerebellar Purkinje cell differentiation"/>
    <property type="evidence" value="ECO:0000250"/>
    <property type="project" value="UniProtKB"/>
</dbReference>
<dbReference type="GO" id="GO:0021937">
    <property type="term" value="P:cerebellar Purkinje cell-granule cell precursor cell signaling"/>
    <property type="evidence" value="ECO:0000250"/>
    <property type="project" value="UniProtKB"/>
</dbReference>
<dbReference type="GO" id="GO:0021549">
    <property type="term" value="P:cerebellum development"/>
    <property type="evidence" value="ECO:0000250"/>
    <property type="project" value="UniProtKB"/>
</dbReference>
<dbReference type="GO" id="GO:0060067">
    <property type="term" value="P:cervix development"/>
    <property type="evidence" value="ECO:0000250"/>
    <property type="project" value="UniProtKB"/>
</dbReference>
<dbReference type="GO" id="GO:0072049">
    <property type="term" value="P:comma-shaped body morphogenesis"/>
    <property type="evidence" value="ECO:0000250"/>
    <property type="project" value="UniProtKB"/>
</dbReference>
<dbReference type="GO" id="GO:0097379">
    <property type="term" value="P:dorsal spinal cord interneuron posterior axon guidance"/>
    <property type="evidence" value="ECO:0000250"/>
    <property type="project" value="UniProtKB"/>
</dbReference>
<dbReference type="GO" id="GO:0009953">
    <property type="term" value="P:dorsal/ventral pattern formation"/>
    <property type="evidence" value="ECO:0000250"/>
    <property type="project" value="UniProtKB"/>
</dbReference>
<dbReference type="GO" id="GO:0001705">
    <property type="term" value="P:ectoderm formation"/>
    <property type="evidence" value="ECO:0000250"/>
    <property type="project" value="UniProtKB"/>
</dbReference>
<dbReference type="GO" id="GO:0009880">
    <property type="term" value="P:embryonic pattern specification"/>
    <property type="evidence" value="ECO:0000250"/>
    <property type="project" value="UniProtKB"/>
</dbReference>
<dbReference type="GO" id="GO:0060059">
    <property type="term" value="P:embryonic retina morphogenesis in camera-type eye"/>
    <property type="evidence" value="ECO:0000250"/>
    <property type="project" value="UniProtKB"/>
</dbReference>
<dbReference type="GO" id="GO:0048703">
    <property type="term" value="P:embryonic viscerocranium morphogenesis"/>
    <property type="evidence" value="ECO:0000250"/>
    <property type="project" value="UniProtKB"/>
</dbReference>
<dbReference type="GO" id="GO:0001706">
    <property type="term" value="P:endoderm formation"/>
    <property type="evidence" value="ECO:0000250"/>
    <property type="project" value="UniProtKB"/>
</dbReference>
<dbReference type="GO" id="GO:0060429">
    <property type="term" value="P:epithelium development"/>
    <property type="evidence" value="ECO:0000250"/>
    <property type="project" value="UniProtKB"/>
</dbReference>
<dbReference type="GO" id="GO:0021871">
    <property type="term" value="P:forebrain regionalization"/>
    <property type="evidence" value="ECO:0000250"/>
    <property type="project" value="UniProtKB"/>
</dbReference>
<dbReference type="GO" id="GO:0001702">
    <property type="term" value="P:gastrulation with mouth forming second"/>
    <property type="evidence" value="ECO:0000250"/>
    <property type="project" value="UniProtKB"/>
</dbReference>
<dbReference type="GO" id="GO:0060322">
    <property type="term" value="P:head development"/>
    <property type="evidence" value="ECO:0000250"/>
    <property type="project" value="UniProtKB"/>
</dbReference>
<dbReference type="GO" id="GO:0001822">
    <property type="term" value="P:kidney development"/>
    <property type="evidence" value="ECO:0000250"/>
    <property type="project" value="UniProtKB"/>
</dbReference>
<dbReference type="GO" id="GO:0097477">
    <property type="term" value="P:lateral motor column neuron migration"/>
    <property type="evidence" value="ECO:0000250"/>
    <property type="project" value="UniProtKB"/>
</dbReference>
<dbReference type="GO" id="GO:0008045">
    <property type="term" value="P:motor neuron axon guidance"/>
    <property type="evidence" value="ECO:0000250"/>
    <property type="project" value="UniProtKB"/>
</dbReference>
<dbReference type="GO" id="GO:0045892">
    <property type="term" value="P:negative regulation of DNA-templated transcription"/>
    <property type="evidence" value="ECO:0000250"/>
    <property type="project" value="UniProtKB"/>
</dbReference>
<dbReference type="GO" id="GO:0072178">
    <property type="term" value="P:nephric duct morphogenesis"/>
    <property type="evidence" value="ECO:0000250"/>
    <property type="project" value="UniProtKB"/>
</dbReference>
<dbReference type="GO" id="GO:0060066">
    <property type="term" value="P:oviduct development"/>
    <property type="evidence" value="ECO:0000250"/>
    <property type="project" value="UniProtKB"/>
</dbReference>
<dbReference type="GO" id="GO:0035846">
    <property type="term" value="P:oviduct epithelium development"/>
    <property type="evidence" value="ECO:0000250"/>
    <property type="project" value="UniProtKB"/>
</dbReference>
<dbReference type="GO" id="GO:0061205">
    <property type="term" value="P:paramesonephric duct development"/>
    <property type="evidence" value="ECO:0000250"/>
    <property type="project" value="UniProtKB"/>
</dbReference>
<dbReference type="GO" id="GO:0007389">
    <property type="term" value="P:pattern specification process"/>
    <property type="evidence" value="ECO:0000250"/>
    <property type="project" value="UniProtKB"/>
</dbReference>
<dbReference type="GO" id="GO:2000744">
    <property type="term" value="P:positive regulation of anterior head development"/>
    <property type="evidence" value="ECO:0000250"/>
    <property type="project" value="UniProtKB"/>
</dbReference>
<dbReference type="GO" id="GO:0090190">
    <property type="term" value="P:positive regulation of branching involved in ureteric bud morphogenesis"/>
    <property type="evidence" value="ECO:0000250"/>
    <property type="project" value="UniProtKB"/>
</dbReference>
<dbReference type="GO" id="GO:0045893">
    <property type="term" value="P:positive regulation of DNA-templated transcription"/>
    <property type="evidence" value="ECO:0000250"/>
    <property type="project" value="UniProtKB"/>
</dbReference>
<dbReference type="GO" id="GO:0040019">
    <property type="term" value="P:positive regulation of embryonic development"/>
    <property type="evidence" value="ECO:0000250"/>
    <property type="project" value="UniProtKB"/>
</dbReference>
<dbReference type="GO" id="GO:2000543">
    <property type="term" value="P:positive regulation of gastrulation"/>
    <property type="evidence" value="ECO:0000250"/>
    <property type="project" value="UniProtKB"/>
</dbReference>
<dbReference type="GO" id="GO:2000768">
    <property type="term" value="P:positive regulation of nephron tubule epithelial cell differentiation"/>
    <property type="evidence" value="ECO:0000250"/>
    <property type="project" value="UniProtKB"/>
</dbReference>
<dbReference type="GO" id="GO:0009791">
    <property type="term" value="P:post-embryonic development"/>
    <property type="evidence" value="ECO:0000250"/>
    <property type="project" value="UniProtKB"/>
</dbReference>
<dbReference type="GO" id="GO:0090009">
    <property type="term" value="P:primitive streak formation"/>
    <property type="evidence" value="ECO:0000250"/>
    <property type="project" value="UniProtKB"/>
</dbReference>
<dbReference type="GO" id="GO:0010468">
    <property type="term" value="P:regulation of gene expression"/>
    <property type="evidence" value="ECO:0000250"/>
    <property type="project" value="UniProtKB"/>
</dbReference>
<dbReference type="GO" id="GO:0072077">
    <property type="term" value="P:renal vesicle morphogenesis"/>
    <property type="evidence" value="ECO:0000250"/>
    <property type="project" value="UniProtKB"/>
</dbReference>
<dbReference type="GO" id="GO:0010842">
    <property type="term" value="P:retina layer formation"/>
    <property type="evidence" value="ECO:0000250"/>
    <property type="project" value="UniProtKB"/>
</dbReference>
<dbReference type="GO" id="GO:0072050">
    <property type="term" value="P:S-shaped body morphogenesis"/>
    <property type="evidence" value="ECO:0000250"/>
    <property type="project" value="UniProtKB"/>
</dbReference>
<dbReference type="GO" id="GO:0021527">
    <property type="term" value="P:spinal cord association neuron differentiation"/>
    <property type="evidence" value="ECO:0000250"/>
    <property type="project" value="UniProtKB"/>
</dbReference>
<dbReference type="GO" id="GO:0006366">
    <property type="term" value="P:transcription by RNA polymerase II"/>
    <property type="evidence" value="ECO:0000250"/>
    <property type="project" value="UniProtKB"/>
</dbReference>
<dbReference type="GO" id="GO:0001657">
    <property type="term" value="P:ureteric bud development"/>
    <property type="evidence" value="ECO:0000250"/>
    <property type="project" value="UniProtKB"/>
</dbReference>
<dbReference type="GO" id="GO:0001655">
    <property type="term" value="P:urogenital system development"/>
    <property type="evidence" value="ECO:0000250"/>
    <property type="project" value="UniProtKB"/>
</dbReference>
<dbReference type="GO" id="GO:0035847">
    <property type="term" value="P:uterine epithelium development"/>
    <property type="evidence" value="ECO:0000250"/>
    <property type="project" value="UniProtKB"/>
</dbReference>
<dbReference type="GO" id="GO:0060065">
    <property type="term" value="P:uterus development"/>
    <property type="evidence" value="ECO:0000250"/>
    <property type="project" value="UniProtKB"/>
</dbReference>
<dbReference type="GO" id="GO:0060068">
    <property type="term" value="P:vagina development"/>
    <property type="evidence" value="ECO:0000250"/>
    <property type="project" value="UniProtKB"/>
</dbReference>
<dbReference type="CDD" id="cd00086">
    <property type="entry name" value="homeodomain"/>
    <property type="match status" value="1"/>
</dbReference>
<dbReference type="CDD" id="cd09367">
    <property type="entry name" value="LIM1_Lhx1_Lhx5"/>
    <property type="match status" value="1"/>
</dbReference>
<dbReference type="CDD" id="cd09375">
    <property type="entry name" value="LIM2_Lhx1_Lhx5"/>
    <property type="match status" value="1"/>
</dbReference>
<dbReference type="FunFam" id="2.10.110.10:FF:000120">
    <property type="entry name" value="Insulin gene enhancer protein ISL-2"/>
    <property type="match status" value="1"/>
</dbReference>
<dbReference type="FunFam" id="1.10.10.60:FF:000075">
    <property type="entry name" value="LIM/homeobox protein Lhx1"/>
    <property type="match status" value="1"/>
</dbReference>
<dbReference type="FunFam" id="2.10.110.10:FF:000046">
    <property type="entry name" value="LIM/homeobox protein Lhx1"/>
    <property type="match status" value="1"/>
</dbReference>
<dbReference type="Gene3D" id="2.10.110.10">
    <property type="entry name" value="Cysteine Rich Protein"/>
    <property type="match status" value="2"/>
</dbReference>
<dbReference type="Gene3D" id="1.10.10.60">
    <property type="entry name" value="Homeodomain-like"/>
    <property type="match status" value="1"/>
</dbReference>
<dbReference type="InterPro" id="IPR001356">
    <property type="entry name" value="HD"/>
</dbReference>
<dbReference type="InterPro" id="IPR017970">
    <property type="entry name" value="Homeobox_CS"/>
</dbReference>
<dbReference type="InterPro" id="IPR009057">
    <property type="entry name" value="Homeodomain-like_sf"/>
</dbReference>
<dbReference type="InterPro" id="IPR049618">
    <property type="entry name" value="Lhx1/5_LIM1"/>
</dbReference>
<dbReference type="InterPro" id="IPR049619">
    <property type="entry name" value="Lhx1/5_LIM2"/>
</dbReference>
<dbReference type="InterPro" id="IPR050453">
    <property type="entry name" value="LIM_Homeobox_TF"/>
</dbReference>
<dbReference type="InterPro" id="IPR001781">
    <property type="entry name" value="Znf_LIM"/>
</dbReference>
<dbReference type="PANTHER" id="PTHR24208">
    <property type="entry name" value="LIM/HOMEOBOX PROTEIN LHX"/>
    <property type="match status" value="1"/>
</dbReference>
<dbReference type="PANTHER" id="PTHR24208:SF106">
    <property type="entry name" value="LIM_HOMEOBOX PROTEIN LHX1"/>
    <property type="match status" value="1"/>
</dbReference>
<dbReference type="Pfam" id="PF00046">
    <property type="entry name" value="Homeodomain"/>
    <property type="match status" value="1"/>
</dbReference>
<dbReference type="Pfam" id="PF00412">
    <property type="entry name" value="LIM"/>
    <property type="match status" value="2"/>
</dbReference>
<dbReference type="SMART" id="SM00389">
    <property type="entry name" value="HOX"/>
    <property type="match status" value="1"/>
</dbReference>
<dbReference type="SMART" id="SM00132">
    <property type="entry name" value="LIM"/>
    <property type="match status" value="2"/>
</dbReference>
<dbReference type="SUPFAM" id="SSF57716">
    <property type="entry name" value="Glucocorticoid receptor-like (DNA-binding domain)"/>
    <property type="match status" value="2"/>
</dbReference>
<dbReference type="SUPFAM" id="SSF46689">
    <property type="entry name" value="Homeodomain-like"/>
    <property type="match status" value="1"/>
</dbReference>
<dbReference type="PROSITE" id="PS00027">
    <property type="entry name" value="HOMEOBOX_1"/>
    <property type="match status" value="1"/>
</dbReference>
<dbReference type="PROSITE" id="PS50071">
    <property type="entry name" value="HOMEOBOX_2"/>
    <property type="match status" value="1"/>
</dbReference>
<dbReference type="PROSITE" id="PS00478">
    <property type="entry name" value="LIM_DOMAIN_1"/>
    <property type="match status" value="2"/>
</dbReference>
<dbReference type="PROSITE" id="PS50023">
    <property type="entry name" value="LIM_DOMAIN_2"/>
    <property type="match status" value="2"/>
</dbReference>
<protein>
    <recommendedName>
        <fullName>LIM/homeobox protein Lhx1</fullName>
        <shortName>LIM homeobox protein 1</shortName>
    </recommendedName>
    <alternativeName>
        <fullName>Homeobox protein Lim-1</fullName>
    </alternativeName>
</protein>
<proteinExistence type="evidence at transcript level"/>
<keyword id="KW-0217">Developmental protein</keyword>
<keyword id="KW-0221">Differentiation</keyword>
<keyword id="KW-0238">DNA-binding</keyword>
<keyword id="KW-0371">Homeobox</keyword>
<keyword id="KW-0440">LIM domain</keyword>
<keyword id="KW-0479">Metal-binding</keyword>
<keyword id="KW-0524">Neurogenesis</keyword>
<keyword id="KW-0539">Nucleus</keyword>
<keyword id="KW-0597">Phosphoprotein</keyword>
<keyword id="KW-1185">Reference proteome</keyword>
<keyword id="KW-0677">Repeat</keyword>
<keyword id="KW-0804">Transcription</keyword>
<keyword id="KW-0805">Transcription regulation</keyword>
<keyword id="KW-0862">Zinc</keyword>
<accession>Q5IS89</accession>
<sequence>MVHCAGCKRPILDRFLLNVLDRAWHVKCVQCCECKCNLTEKCFSREGKLYCKNDFFRCFGTKCAGCAQGISPSDLVRRARSKVFHLNCFTCMMCNKQLSTGEELYIIDENKFVCKEDYLSNSSVAKENSLHSATTGSDPSLSPDSQDPSQDDAKDSESANVSDKEGGSNENDDQNLGAKRRGPRTTIKAKQLETLKAAFAATPKPTRHIREQLAQETGLNMRVIQVWFQNRRSKERRMKQLSALGARRHAFFRSPRRMRPLVDRLEPGELIPNGPFSFYGDYQSEYYGPGGNYDFFPQGPPSSQAQTPVDLPFVPSSGPSGTPLGGLEHPLPGHHPSSEAQRFTDILAHPPGDSPSPEPSLPGPLHSMSAEVFGPSPPFSSLSVNGGASYGNHLSHPPEMNEAAVW</sequence>
<reference key="1">
    <citation type="journal article" date="2004" name="Cell">
        <title>Accelerated evolution of nervous system genes in the origin of Homo sapiens.</title>
        <authorList>
            <person name="Dorus S."/>
            <person name="Vallender E.J."/>
            <person name="Evans P.D."/>
            <person name="Anderson J.R."/>
            <person name="Gilbert S.L."/>
            <person name="Mahowald M."/>
            <person name="Wyckoff G.J."/>
            <person name="Malcom C.M."/>
            <person name="Lahn B.T."/>
        </authorList>
    </citation>
    <scope>NUCLEOTIDE SEQUENCE [MRNA]</scope>
</reference>
<evidence type="ECO:0000250" key="1"/>
<evidence type="ECO:0000250" key="2">
    <source>
        <dbReference type="UniProtKB" id="P63007"/>
    </source>
</evidence>
<evidence type="ECO:0000255" key="3">
    <source>
        <dbReference type="PROSITE-ProRule" id="PRU00108"/>
    </source>
</evidence>
<evidence type="ECO:0000255" key="4">
    <source>
        <dbReference type="PROSITE-ProRule" id="PRU00125"/>
    </source>
</evidence>
<evidence type="ECO:0000256" key="5">
    <source>
        <dbReference type="SAM" id="MobiDB-lite"/>
    </source>
</evidence>
<evidence type="ECO:0000305" key="6"/>
<feature type="chain" id="PRO_0000075774" description="LIM/homeobox protein Lhx1">
    <location>
        <begin position="1"/>
        <end position="406"/>
    </location>
</feature>
<feature type="domain" description="LIM zinc-binding 1" evidence="4">
    <location>
        <begin position="4"/>
        <end position="54"/>
    </location>
</feature>
<feature type="domain" description="LIM zinc-binding 2" evidence="4">
    <location>
        <begin position="63"/>
        <end position="117"/>
    </location>
</feature>
<feature type="DNA-binding region" description="Homeobox" evidence="3">
    <location>
        <begin position="180"/>
        <end position="239"/>
    </location>
</feature>
<feature type="region of interest" description="Disordered" evidence="5">
    <location>
        <begin position="128"/>
        <end position="189"/>
    </location>
</feature>
<feature type="region of interest" description="Disordered" evidence="5">
    <location>
        <begin position="293"/>
        <end position="374"/>
    </location>
</feature>
<feature type="compositionally biased region" description="Low complexity" evidence="5">
    <location>
        <begin position="137"/>
        <end position="148"/>
    </location>
</feature>
<feature type="compositionally biased region" description="Basic and acidic residues" evidence="5">
    <location>
        <begin position="151"/>
        <end position="167"/>
    </location>
</feature>
<feature type="compositionally biased region" description="Low complexity" evidence="5">
    <location>
        <begin position="315"/>
        <end position="327"/>
    </location>
</feature>
<feature type="compositionally biased region" description="Pro residues" evidence="5">
    <location>
        <begin position="352"/>
        <end position="362"/>
    </location>
</feature>
<feature type="modified residue" description="Phosphoserine" evidence="2">
    <location>
        <position position="162"/>
    </location>
</feature>
<organism>
    <name type="scientific">Saimiri boliviensis boliviensis</name>
    <name type="common">Bolivian squirrel monkey</name>
    <dbReference type="NCBI Taxonomy" id="39432"/>
    <lineage>
        <taxon>Eukaryota</taxon>
        <taxon>Metazoa</taxon>
        <taxon>Chordata</taxon>
        <taxon>Craniata</taxon>
        <taxon>Vertebrata</taxon>
        <taxon>Euteleostomi</taxon>
        <taxon>Mammalia</taxon>
        <taxon>Eutheria</taxon>
        <taxon>Euarchontoglires</taxon>
        <taxon>Primates</taxon>
        <taxon>Haplorrhini</taxon>
        <taxon>Platyrrhini</taxon>
        <taxon>Cebidae</taxon>
        <taxon>Saimiriinae</taxon>
        <taxon>Saimiri</taxon>
    </lineage>
</organism>
<gene>
    <name type="primary">LHX1</name>
</gene>
<comment type="function">
    <text evidence="1">Potential transcription factor. May play a role in early mesoderm formation and later in lateral mesoderm differentiation and neurogenesis (By similarity).</text>
</comment>
<comment type="subunit">
    <text evidence="1">Interacts with LDB1 via the tandem LIM domains.</text>
</comment>
<comment type="subcellular location">
    <subcellularLocation>
        <location evidence="6">Nucleus</location>
    </subcellularLocation>
</comment>
<comment type="domain">
    <text evidence="1">The LIM domains exert a negative regulatory function and disruption of the LIM domains produces an activated form. In addition, two activation domains and a negative regulatory domain exist C-terminally to the homeobox (By similarity).</text>
</comment>
<name>LHX1_SAIBB</name>